<organism>
    <name type="scientific">Rhodocyclus tenuis</name>
    <name type="common">Rhodospirillum tenue</name>
    <dbReference type="NCBI Taxonomy" id="1066"/>
    <lineage>
        <taxon>Bacteria</taxon>
        <taxon>Pseudomonadati</taxon>
        <taxon>Pseudomonadota</taxon>
        <taxon>Betaproteobacteria</taxon>
        <taxon>Rhodocyclales</taxon>
        <taxon>Rhodocyclaceae</taxon>
        <taxon>Rhodocyclus</taxon>
    </lineage>
</organism>
<dbReference type="PIR" id="S68882">
    <property type="entry name" value="S68882"/>
</dbReference>
<dbReference type="SMR" id="P80587"/>
<dbReference type="GO" id="GO:0005886">
    <property type="term" value="C:plasma membrane"/>
    <property type="evidence" value="ECO:0007669"/>
    <property type="project" value="UniProtKB-SubCell"/>
</dbReference>
<dbReference type="GO" id="GO:0030077">
    <property type="term" value="C:plasma membrane light-harvesting complex"/>
    <property type="evidence" value="ECO:0007669"/>
    <property type="project" value="InterPro"/>
</dbReference>
<dbReference type="GO" id="GO:0042314">
    <property type="term" value="F:bacteriochlorophyll binding"/>
    <property type="evidence" value="ECO:0007669"/>
    <property type="project" value="UniProtKB-KW"/>
</dbReference>
<dbReference type="GO" id="GO:0045156">
    <property type="term" value="F:electron transporter, transferring electrons within the cyclic electron transport pathway of photosynthesis activity"/>
    <property type="evidence" value="ECO:0007669"/>
    <property type="project" value="InterPro"/>
</dbReference>
<dbReference type="GO" id="GO:0046872">
    <property type="term" value="F:metal ion binding"/>
    <property type="evidence" value="ECO:0007669"/>
    <property type="project" value="UniProtKB-KW"/>
</dbReference>
<dbReference type="GO" id="GO:0019684">
    <property type="term" value="P:photosynthesis, light reaction"/>
    <property type="evidence" value="ECO:0007669"/>
    <property type="project" value="InterPro"/>
</dbReference>
<dbReference type="Gene3D" id="1.20.5.250">
    <property type="match status" value="1"/>
</dbReference>
<dbReference type="InterPro" id="IPR000066">
    <property type="entry name" value="Antenna_a/b"/>
</dbReference>
<dbReference type="InterPro" id="IPR023623">
    <property type="entry name" value="Antenna_beta_CS"/>
</dbReference>
<dbReference type="InterPro" id="IPR023624">
    <property type="entry name" value="Antenna_beta_dom_sf"/>
</dbReference>
<dbReference type="InterPro" id="IPR002362">
    <property type="entry name" value="LHB-1/5"/>
</dbReference>
<dbReference type="InterPro" id="IPR035889">
    <property type="entry name" value="Light-harvesting_complex"/>
</dbReference>
<dbReference type="NCBIfam" id="NF040862">
    <property type="entry name" value="pufB_517_ASD"/>
    <property type="match status" value="1"/>
</dbReference>
<dbReference type="Pfam" id="PF00556">
    <property type="entry name" value="LHC"/>
    <property type="match status" value="1"/>
</dbReference>
<dbReference type="PIRSF" id="PIRSF002900">
    <property type="entry name" value="Antenna_beta"/>
    <property type="match status" value="1"/>
</dbReference>
<dbReference type="PRINTS" id="PR00674">
    <property type="entry name" value="LIGHTHARVSTB"/>
</dbReference>
<dbReference type="SUPFAM" id="SSF56918">
    <property type="entry name" value="Light-harvesting complex subunits"/>
    <property type="match status" value="1"/>
</dbReference>
<dbReference type="PROSITE" id="PS00969">
    <property type="entry name" value="ANTENNA_COMP_BETA"/>
    <property type="match status" value="1"/>
</dbReference>
<evidence type="ECO:0000255" key="1"/>
<evidence type="ECO:0000305" key="2"/>
<keyword id="KW-0042">Antenna complex</keyword>
<keyword id="KW-0076">Bacteriochlorophyll</keyword>
<keyword id="KW-0997">Cell inner membrane</keyword>
<keyword id="KW-1003">Cell membrane</keyword>
<keyword id="KW-0148">Chlorophyll</keyword>
<keyword id="KW-0157">Chromophore</keyword>
<keyword id="KW-0903">Direct protein sequencing</keyword>
<keyword id="KW-0437">Light-harvesting polypeptide</keyword>
<keyword id="KW-0460">Magnesium</keyword>
<keyword id="KW-0472">Membrane</keyword>
<keyword id="KW-0479">Metal-binding</keyword>
<keyword id="KW-0812">Transmembrane</keyword>
<keyword id="KW-1133">Transmembrane helix</keyword>
<reference key="1">
    <citation type="journal article" date="1996" name="Eur. J. Biochem.">
        <title>The antenna complexes of the purple non-sulfur photosynthetic bacterium Rhodocyclus tenuis. Structural and spectral characterization.</title>
        <authorList>
            <person name="Hu Q."/>
            <person name="Brunisholz R.A."/>
            <person name="Frank G."/>
            <person name="Zuber H."/>
        </authorList>
    </citation>
    <scope>PROTEIN SEQUENCE</scope>
    <source>
        <strain>ATCC 25093 / DSM 109 / 2761</strain>
    </source>
</reference>
<feature type="chain" id="PRO_0000099838" description="Light-harvesting polypeptide B-800/860 beta chain">
    <location>
        <begin position="1"/>
        <end position="55"/>
    </location>
</feature>
<feature type="topological domain" description="Cytoplasmic" evidence="1">
    <location>
        <begin position="1"/>
        <end position="21"/>
    </location>
</feature>
<feature type="transmembrane region" description="Helical" evidence="1">
    <location>
        <begin position="22"/>
        <end position="44"/>
    </location>
</feature>
<feature type="topological domain" description="Periplasmic" evidence="1">
    <location>
        <begin position="45"/>
        <end position="55"/>
    </location>
</feature>
<feature type="binding site" description="axial binding residue" evidence="1">
    <location>
        <position position="38"/>
    </location>
    <ligand>
        <name>a bacteriochlorophyll</name>
        <dbReference type="ChEBI" id="CHEBI:38201"/>
    </ligand>
    <ligandPart>
        <name>Mg</name>
        <dbReference type="ChEBI" id="CHEBI:25107"/>
    </ligandPart>
</feature>
<comment type="function">
    <text>Antenna complexes are light-harvesting systems, which transfer the excitation energy to the reaction centers.</text>
</comment>
<comment type="subunit">
    <text>The core complex is formed by different alpha and beta chains, binding bacteriochlorophyll molecules, and arranged most probably in tetrameric structures disposed around the reaction center. The non-pigmented gamma chains may constitute additional components.</text>
</comment>
<comment type="subcellular location">
    <subcellularLocation>
        <location>Cell inner membrane</location>
        <topology>Single-pass type II membrane protein</topology>
    </subcellularLocation>
</comment>
<comment type="similarity">
    <text evidence="2">Belongs to the antenna complex beta subunit family.</text>
</comment>
<protein>
    <recommendedName>
        <fullName>Light-harvesting polypeptide B-800/860 beta chain</fullName>
    </recommendedName>
    <alternativeName>
        <fullName>Antenna pigment polypeptide beta chain</fullName>
    </alternativeName>
    <alternativeName>
        <fullName>LH-2</fullName>
    </alternativeName>
</protein>
<accession>P80587</accession>
<sequence length="55" mass="5787">ADANKVWPTGLTVAEAEELHTYVTNGFRVFVGIAVVAHVLVFAAHPWGRGGALVA</sequence>
<proteinExistence type="evidence at protein level"/>
<name>LHB_RHOTE</name>